<dbReference type="EMBL" id="CP001144">
    <property type="protein sequence ID" value="ACH75937.1"/>
    <property type="molecule type" value="Genomic_DNA"/>
</dbReference>
<dbReference type="RefSeq" id="WP_000511329.1">
    <property type="nucleotide sequence ID" value="NC_011205.1"/>
</dbReference>
<dbReference type="KEGG" id="sed:SeD_A4959"/>
<dbReference type="HOGENOM" id="CLU_117642_1_0_6"/>
<dbReference type="Proteomes" id="UP000008322">
    <property type="component" value="Chromosome"/>
</dbReference>
<dbReference type="GO" id="GO:0005886">
    <property type="term" value="C:plasma membrane"/>
    <property type="evidence" value="ECO:0007669"/>
    <property type="project" value="UniProtKB-SubCell"/>
</dbReference>
<dbReference type="GO" id="GO:0015744">
    <property type="term" value="P:succinate transport"/>
    <property type="evidence" value="ECO:0007669"/>
    <property type="project" value="UniProtKB-UniRule"/>
</dbReference>
<dbReference type="HAMAP" id="MF_01191">
    <property type="entry name" value="YjjB"/>
    <property type="match status" value="1"/>
</dbReference>
<dbReference type="InterPro" id="IPR024528">
    <property type="entry name" value="ThrE_2"/>
</dbReference>
<dbReference type="InterPro" id="IPR050539">
    <property type="entry name" value="ThrE_Dicarb/AminoAcid_Exp"/>
</dbReference>
<dbReference type="InterPro" id="IPR020914">
    <property type="entry name" value="YjjB"/>
</dbReference>
<dbReference type="NCBIfam" id="NF007391">
    <property type="entry name" value="PRK09917.1"/>
    <property type="match status" value="1"/>
</dbReference>
<dbReference type="PANTHER" id="PTHR34390:SF1">
    <property type="entry name" value="SUCCINATE TRANSPORTER SUBUNIT YJJB-RELATED"/>
    <property type="match status" value="1"/>
</dbReference>
<dbReference type="PANTHER" id="PTHR34390">
    <property type="entry name" value="UPF0442 PROTEIN YJJB-RELATED"/>
    <property type="match status" value="1"/>
</dbReference>
<dbReference type="Pfam" id="PF12821">
    <property type="entry name" value="ThrE_2"/>
    <property type="match status" value="1"/>
</dbReference>
<reference key="1">
    <citation type="journal article" date="2011" name="J. Bacteriol.">
        <title>Comparative genomics of 28 Salmonella enterica isolates: evidence for CRISPR-mediated adaptive sublineage evolution.</title>
        <authorList>
            <person name="Fricke W.F."/>
            <person name="Mammel M.K."/>
            <person name="McDermott P.F."/>
            <person name="Tartera C."/>
            <person name="White D.G."/>
            <person name="Leclerc J.E."/>
            <person name="Ravel J."/>
            <person name="Cebula T.A."/>
        </authorList>
    </citation>
    <scope>NUCLEOTIDE SEQUENCE [LARGE SCALE GENOMIC DNA]</scope>
    <source>
        <strain>CT_02021853</strain>
    </source>
</reference>
<keyword id="KW-0997">Cell inner membrane</keyword>
<keyword id="KW-1003">Cell membrane</keyword>
<keyword id="KW-0472">Membrane</keyword>
<keyword id="KW-0812">Transmembrane</keyword>
<keyword id="KW-1133">Transmembrane helix</keyword>
<keyword id="KW-0813">Transport</keyword>
<feature type="chain" id="PRO_1000138370" description="Probable succinate transporter subunit YjjB">
    <location>
        <begin position="1"/>
        <end position="157"/>
    </location>
</feature>
<feature type="transmembrane region" description="Helical" evidence="1">
    <location>
        <begin position="8"/>
        <end position="28"/>
    </location>
</feature>
<feature type="transmembrane region" description="Helical" evidence="1">
    <location>
        <begin position="55"/>
        <end position="75"/>
    </location>
</feature>
<feature type="transmembrane region" description="Helical" evidence="1">
    <location>
        <begin position="87"/>
        <end position="107"/>
    </location>
</feature>
<feature type="transmembrane region" description="Helical" evidence="1">
    <location>
        <begin position="129"/>
        <end position="149"/>
    </location>
</feature>
<gene>
    <name evidence="1" type="primary">yjjB</name>
    <name type="ordered locus">SeD_A4959</name>
</gene>
<comment type="function">
    <text evidence="1">Involved in succinate export with YjjP. Both proteins are required for export.</text>
</comment>
<comment type="subunit">
    <text evidence="1">The transporter is composed of YjjB and YjjP.</text>
</comment>
<comment type="subcellular location">
    <subcellularLocation>
        <location evidence="1">Cell inner membrane</location>
        <topology evidence="1">Multi-pass membrane protein</topology>
    </subcellularLocation>
</comment>
<comment type="similarity">
    <text evidence="1">Belongs to the ThrE exporter (TC 2.A.79) family.</text>
</comment>
<protein>
    <recommendedName>
        <fullName evidence="1">Probable succinate transporter subunit YjjB</fullName>
    </recommendedName>
</protein>
<accession>B5FTA5</accession>
<name>YJJB_SALDC</name>
<proteinExistence type="inferred from homology"/>
<evidence type="ECO:0000255" key="1">
    <source>
        <dbReference type="HAMAP-Rule" id="MF_01191"/>
    </source>
</evidence>
<organism>
    <name type="scientific">Salmonella dublin (strain CT_02021853)</name>
    <dbReference type="NCBI Taxonomy" id="439851"/>
    <lineage>
        <taxon>Bacteria</taxon>
        <taxon>Pseudomonadati</taxon>
        <taxon>Pseudomonadota</taxon>
        <taxon>Gammaproteobacteria</taxon>
        <taxon>Enterobacterales</taxon>
        <taxon>Enterobacteriaceae</taxon>
        <taxon>Salmonella</taxon>
    </lineage>
</organism>
<sequence length="157" mass="17116">MGIIDFLLALMQDMILSAIPAVGFAMVFNVPHRALPWCALLGALGHGSRMLMMSAGFNIEWSTFMASLLVGSIGIQWSRWYLAHPKVFTVAAVIPMFPGISAYTAMISAVKISHLGYSEPMMITLLTNFLKASSIVGALSIGLSVPGLWLYRKRPRV</sequence>